<sequence>MLDQLSVESIPPLLGASKAQLTHWAQTYQQPAYRGQQVHQWIYQKGVHSLSDITVLPKQWRTEIADIPVGRSQIHHRSAAQDGTVKYLLKLADGQIIETVGIPTQKRLTVCVSSQVGCPMGCDFCATGKGEYQRNLACHEIVDQVLTVQEDFQQRVGNVVFMGMGEPLLNLEQVLAAVRSLNQDVGIGQRSLTVSTVGIPKQILKLAQHQLQITLAVSLHASNQRIRTQLVPSAKHYPLEKLLKDCRAYVTQTGRRVTFEYIVLSGVNDQTEHALELAHHLRGFQSHVNLIPYNPISEVDYQRPTQKQLQQFLNSLQSQHITASIRRSRGLDKDAACGQLRATQMIDPASS</sequence>
<comment type="function">
    <text evidence="1">Specifically methylates position 2 of adenine 2503 in 23S rRNA and position 2 of adenine 37 in tRNAs.</text>
</comment>
<comment type="catalytic activity">
    <reaction evidence="1">
        <text>adenosine(2503) in 23S rRNA + 2 reduced [2Fe-2S]-[ferredoxin] + 2 S-adenosyl-L-methionine = 2-methyladenosine(2503) in 23S rRNA + 5'-deoxyadenosine + L-methionine + 2 oxidized [2Fe-2S]-[ferredoxin] + S-adenosyl-L-homocysteine</text>
        <dbReference type="Rhea" id="RHEA:42916"/>
        <dbReference type="Rhea" id="RHEA-COMP:10000"/>
        <dbReference type="Rhea" id="RHEA-COMP:10001"/>
        <dbReference type="Rhea" id="RHEA-COMP:10152"/>
        <dbReference type="Rhea" id="RHEA-COMP:10282"/>
        <dbReference type="ChEBI" id="CHEBI:17319"/>
        <dbReference type="ChEBI" id="CHEBI:33737"/>
        <dbReference type="ChEBI" id="CHEBI:33738"/>
        <dbReference type="ChEBI" id="CHEBI:57844"/>
        <dbReference type="ChEBI" id="CHEBI:57856"/>
        <dbReference type="ChEBI" id="CHEBI:59789"/>
        <dbReference type="ChEBI" id="CHEBI:74411"/>
        <dbReference type="ChEBI" id="CHEBI:74497"/>
        <dbReference type="EC" id="2.1.1.192"/>
    </reaction>
</comment>
<comment type="catalytic activity">
    <reaction evidence="1">
        <text>adenosine(37) in tRNA + 2 reduced [2Fe-2S]-[ferredoxin] + 2 S-adenosyl-L-methionine = 2-methyladenosine(37) in tRNA + 5'-deoxyadenosine + L-methionine + 2 oxidized [2Fe-2S]-[ferredoxin] + S-adenosyl-L-homocysteine</text>
        <dbReference type="Rhea" id="RHEA:43332"/>
        <dbReference type="Rhea" id="RHEA-COMP:10000"/>
        <dbReference type="Rhea" id="RHEA-COMP:10001"/>
        <dbReference type="Rhea" id="RHEA-COMP:10162"/>
        <dbReference type="Rhea" id="RHEA-COMP:10485"/>
        <dbReference type="ChEBI" id="CHEBI:17319"/>
        <dbReference type="ChEBI" id="CHEBI:33737"/>
        <dbReference type="ChEBI" id="CHEBI:33738"/>
        <dbReference type="ChEBI" id="CHEBI:57844"/>
        <dbReference type="ChEBI" id="CHEBI:57856"/>
        <dbReference type="ChEBI" id="CHEBI:59789"/>
        <dbReference type="ChEBI" id="CHEBI:74411"/>
        <dbReference type="ChEBI" id="CHEBI:74497"/>
        <dbReference type="EC" id="2.1.1.192"/>
    </reaction>
</comment>
<comment type="cofactor">
    <cofactor evidence="1">
        <name>[4Fe-4S] cluster</name>
        <dbReference type="ChEBI" id="CHEBI:49883"/>
    </cofactor>
    <text evidence="1">Binds 1 [4Fe-4S] cluster. The cluster is coordinated with 3 cysteines and an exchangeable S-adenosyl-L-methionine.</text>
</comment>
<comment type="subcellular location">
    <subcellularLocation>
        <location evidence="1">Cytoplasm</location>
    </subcellularLocation>
</comment>
<comment type="miscellaneous">
    <text evidence="1">Reaction proceeds by a ping-pong mechanism involving intermediate methylation of a conserved cysteine residue.</text>
</comment>
<comment type="similarity">
    <text evidence="1">Belongs to the radical SAM superfamily. RlmN family.</text>
</comment>
<feature type="chain" id="PRO_0000349990" description="Probable dual-specificity RNA methyltransferase RlmN">
    <location>
        <begin position="1"/>
        <end position="351"/>
    </location>
</feature>
<feature type="domain" description="Radical SAM core" evidence="2">
    <location>
        <begin position="104"/>
        <end position="332"/>
    </location>
</feature>
<feature type="active site" description="Proton acceptor" evidence="1">
    <location>
        <position position="98"/>
    </location>
</feature>
<feature type="active site" description="S-methylcysteine intermediate" evidence="1">
    <location>
        <position position="337"/>
    </location>
</feature>
<feature type="binding site" evidence="1">
    <location>
        <position position="118"/>
    </location>
    <ligand>
        <name>[4Fe-4S] cluster</name>
        <dbReference type="ChEBI" id="CHEBI:49883"/>
        <note>4Fe-4S-S-AdoMet</note>
    </ligand>
</feature>
<feature type="binding site" evidence="1">
    <location>
        <position position="122"/>
    </location>
    <ligand>
        <name>[4Fe-4S] cluster</name>
        <dbReference type="ChEBI" id="CHEBI:49883"/>
        <note>4Fe-4S-S-AdoMet</note>
    </ligand>
</feature>
<feature type="binding site" evidence="1">
    <location>
        <position position="125"/>
    </location>
    <ligand>
        <name>[4Fe-4S] cluster</name>
        <dbReference type="ChEBI" id="CHEBI:49883"/>
        <note>4Fe-4S-S-AdoMet</note>
    </ligand>
</feature>
<feature type="binding site" evidence="1">
    <location>
        <begin position="165"/>
        <end position="166"/>
    </location>
    <ligand>
        <name>S-adenosyl-L-methionine</name>
        <dbReference type="ChEBI" id="CHEBI:59789"/>
    </ligand>
</feature>
<feature type="binding site" evidence="1">
    <location>
        <position position="195"/>
    </location>
    <ligand>
        <name>S-adenosyl-L-methionine</name>
        <dbReference type="ChEBI" id="CHEBI:59789"/>
    </ligand>
</feature>
<feature type="binding site" evidence="1">
    <location>
        <begin position="218"/>
        <end position="220"/>
    </location>
    <ligand>
        <name>S-adenosyl-L-methionine</name>
        <dbReference type="ChEBI" id="CHEBI:59789"/>
    </ligand>
</feature>
<feature type="binding site" evidence="1">
    <location>
        <position position="294"/>
    </location>
    <ligand>
        <name>S-adenosyl-L-methionine</name>
        <dbReference type="ChEBI" id="CHEBI:59789"/>
    </ligand>
</feature>
<feature type="disulfide bond" description="(transient)" evidence="1">
    <location>
        <begin position="111"/>
        <end position="337"/>
    </location>
</feature>
<proteinExistence type="inferred from homology"/>
<name>RLMN_ACAM1</name>
<evidence type="ECO:0000255" key="1">
    <source>
        <dbReference type="HAMAP-Rule" id="MF_01849"/>
    </source>
</evidence>
<evidence type="ECO:0000255" key="2">
    <source>
        <dbReference type="PROSITE-ProRule" id="PRU01266"/>
    </source>
</evidence>
<organism>
    <name type="scientific">Acaryochloris marina (strain MBIC 11017)</name>
    <dbReference type="NCBI Taxonomy" id="329726"/>
    <lineage>
        <taxon>Bacteria</taxon>
        <taxon>Bacillati</taxon>
        <taxon>Cyanobacteriota</taxon>
        <taxon>Cyanophyceae</taxon>
        <taxon>Acaryochloridales</taxon>
        <taxon>Acaryochloridaceae</taxon>
        <taxon>Acaryochloris</taxon>
    </lineage>
</organism>
<gene>
    <name evidence="1" type="primary">rlmN</name>
    <name type="ordered locus">AM1_3982</name>
</gene>
<reference key="1">
    <citation type="journal article" date="2008" name="Proc. Natl. Acad. Sci. U.S.A.">
        <title>Niche adaptation and genome expansion in the chlorophyll d-producing cyanobacterium Acaryochloris marina.</title>
        <authorList>
            <person name="Swingley W.D."/>
            <person name="Chen M."/>
            <person name="Cheung P.C."/>
            <person name="Conrad A.L."/>
            <person name="Dejesa L.C."/>
            <person name="Hao J."/>
            <person name="Honchak B.M."/>
            <person name="Karbach L.E."/>
            <person name="Kurdoglu A."/>
            <person name="Lahiri S."/>
            <person name="Mastrian S.D."/>
            <person name="Miyashita H."/>
            <person name="Page L."/>
            <person name="Ramakrishna P."/>
            <person name="Satoh S."/>
            <person name="Sattley W.M."/>
            <person name="Shimada Y."/>
            <person name="Taylor H.L."/>
            <person name="Tomo T."/>
            <person name="Tsuchiya T."/>
            <person name="Wang Z.T."/>
            <person name="Raymond J."/>
            <person name="Mimuro M."/>
            <person name="Blankenship R.E."/>
            <person name="Touchman J.W."/>
        </authorList>
    </citation>
    <scope>NUCLEOTIDE SEQUENCE [LARGE SCALE GENOMIC DNA]</scope>
    <source>
        <strain>MBIC 11017</strain>
    </source>
</reference>
<keyword id="KW-0004">4Fe-4S</keyword>
<keyword id="KW-0963">Cytoplasm</keyword>
<keyword id="KW-1015">Disulfide bond</keyword>
<keyword id="KW-0408">Iron</keyword>
<keyword id="KW-0411">Iron-sulfur</keyword>
<keyword id="KW-0479">Metal-binding</keyword>
<keyword id="KW-0489">Methyltransferase</keyword>
<keyword id="KW-1185">Reference proteome</keyword>
<keyword id="KW-0698">rRNA processing</keyword>
<keyword id="KW-0949">S-adenosyl-L-methionine</keyword>
<keyword id="KW-0808">Transferase</keyword>
<keyword id="KW-0819">tRNA processing</keyword>
<dbReference type="EC" id="2.1.1.192" evidence="1"/>
<dbReference type="EMBL" id="CP000828">
    <property type="protein sequence ID" value="ABW28967.1"/>
    <property type="molecule type" value="Genomic_DNA"/>
</dbReference>
<dbReference type="RefSeq" id="WP_012164323.1">
    <property type="nucleotide sequence ID" value="NC_009925.1"/>
</dbReference>
<dbReference type="SMR" id="B0C9F4"/>
<dbReference type="STRING" id="329726.AM1_3982"/>
<dbReference type="KEGG" id="amr:AM1_3982"/>
<dbReference type="eggNOG" id="COG0820">
    <property type="taxonomic scope" value="Bacteria"/>
</dbReference>
<dbReference type="HOGENOM" id="CLU_029101_1_1_3"/>
<dbReference type="OrthoDB" id="9793973at2"/>
<dbReference type="Proteomes" id="UP000000268">
    <property type="component" value="Chromosome"/>
</dbReference>
<dbReference type="GO" id="GO:0005737">
    <property type="term" value="C:cytoplasm"/>
    <property type="evidence" value="ECO:0007669"/>
    <property type="project" value="UniProtKB-SubCell"/>
</dbReference>
<dbReference type="GO" id="GO:0051539">
    <property type="term" value="F:4 iron, 4 sulfur cluster binding"/>
    <property type="evidence" value="ECO:0007669"/>
    <property type="project" value="UniProtKB-UniRule"/>
</dbReference>
<dbReference type="GO" id="GO:0046872">
    <property type="term" value="F:metal ion binding"/>
    <property type="evidence" value="ECO:0007669"/>
    <property type="project" value="UniProtKB-KW"/>
</dbReference>
<dbReference type="GO" id="GO:0070040">
    <property type="term" value="F:rRNA (adenine(2503)-C2-)-methyltransferase activity"/>
    <property type="evidence" value="ECO:0007669"/>
    <property type="project" value="UniProtKB-UniRule"/>
</dbReference>
<dbReference type="GO" id="GO:0019843">
    <property type="term" value="F:rRNA binding"/>
    <property type="evidence" value="ECO:0007669"/>
    <property type="project" value="UniProtKB-UniRule"/>
</dbReference>
<dbReference type="GO" id="GO:0002935">
    <property type="term" value="F:tRNA (adenine(37)-C2)-methyltransferase activity"/>
    <property type="evidence" value="ECO:0007669"/>
    <property type="project" value="UniProtKB-UniRule"/>
</dbReference>
<dbReference type="GO" id="GO:0000049">
    <property type="term" value="F:tRNA binding"/>
    <property type="evidence" value="ECO:0007669"/>
    <property type="project" value="UniProtKB-UniRule"/>
</dbReference>
<dbReference type="GO" id="GO:0070475">
    <property type="term" value="P:rRNA base methylation"/>
    <property type="evidence" value="ECO:0007669"/>
    <property type="project" value="UniProtKB-UniRule"/>
</dbReference>
<dbReference type="GO" id="GO:0030488">
    <property type="term" value="P:tRNA methylation"/>
    <property type="evidence" value="ECO:0007669"/>
    <property type="project" value="UniProtKB-UniRule"/>
</dbReference>
<dbReference type="CDD" id="cd01335">
    <property type="entry name" value="Radical_SAM"/>
    <property type="match status" value="1"/>
</dbReference>
<dbReference type="FunFam" id="3.20.20.70:FF:000014">
    <property type="entry name" value="Probable dual-specificity RNA methyltransferase RlmN"/>
    <property type="match status" value="1"/>
</dbReference>
<dbReference type="Gene3D" id="1.10.150.530">
    <property type="match status" value="1"/>
</dbReference>
<dbReference type="Gene3D" id="3.20.20.70">
    <property type="entry name" value="Aldolase class I"/>
    <property type="match status" value="1"/>
</dbReference>
<dbReference type="HAMAP" id="MF_01849">
    <property type="entry name" value="RNA_methyltr_RlmN"/>
    <property type="match status" value="1"/>
</dbReference>
<dbReference type="InterPro" id="IPR013785">
    <property type="entry name" value="Aldolase_TIM"/>
</dbReference>
<dbReference type="InterPro" id="IPR040072">
    <property type="entry name" value="Methyltransferase_A"/>
</dbReference>
<dbReference type="InterPro" id="IPR048641">
    <property type="entry name" value="RlmN_N"/>
</dbReference>
<dbReference type="InterPro" id="IPR027492">
    <property type="entry name" value="RNA_MTrfase_RlmN"/>
</dbReference>
<dbReference type="InterPro" id="IPR004383">
    <property type="entry name" value="rRNA_lsu_MTrfase_RlmN/Cfr"/>
</dbReference>
<dbReference type="InterPro" id="IPR007197">
    <property type="entry name" value="rSAM"/>
</dbReference>
<dbReference type="NCBIfam" id="TIGR00048">
    <property type="entry name" value="rRNA_mod_RlmN"/>
    <property type="match status" value="1"/>
</dbReference>
<dbReference type="PANTHER" id="PTHR30544">
    <property type="entry name" value="23S RRNA METHYLTRANSFERASE"/>
    <property type="match status" value="1"/>
</dbReference>
<dbReference type="PANTHER" id="PTHR30544:SF5">
    <property type="entry name" value="RADICAL SAM CORE DOMAIN-CONTAINING PROTEIN"/>
    <property type="match status" value="1"/>
</dbReference>
<dbReference type="Pfam" id="PF04055">
    <property type="entry name" value="Radical_SAM"/>
    <property type="match status" value="1"/>
</dbReference>
<dbReference type="Pfam" id="PF21016">
    <property type="entry name" value="RlmN_N"/>
    <property type="match status" value="1"/>
</dbReference>
<dbReference type="PIRSF" id="PIRSF006004">
    <property type="entry name" value="CHP00048"/>
    <property type="match status" value="1"/>
</dbReference>
<dbReference type="SFLD" id="SFLDF00275">
    <property type="entry name" value="adenosine_C2_methyltransferase"/>
    <property type="match status" value="1"/>
</dbReference>
<dbReference type="SFLD" id="SFLDG01062">
    <property type="entry name" value="methyltransferase_(Class_A)"/>
    <property type="match status" value="1"/>
</dbReference>
<dbReference type="SUPFAM" id="SSF102114">
    <property type="entry name" value="Radical SAM enzymes"/>
    <property type="match status" value="1"/>
</dbReference>
<dbReference type="PROSITE" id="PS51918">
    <property type="entry name" value="RADICAL_SAM"/>
    <property type="match status" value="1"/>
</dbReference>
<protein>
    <recommendedName>
        <fullName evidence="1">Probable dual-specificity RNA methyltransferase RlmN</fullName>
        <ecNumber evidence="1">2.1.1.192</ecNumber>
    </recommendedName>
    <alternativeName>
        <fullName evidence="1">23S rRNA (adenine(2503)-C(2))-methyltransferase</fullName>
    </alternativeName>
    <alternativeName>
        <fullName evidence="1">23S rRNA m2A2503 methyltransferase</fullName>
    </alternativeName>
    <alternativeName>
        <fullName evidence="1">Ribosomal RNA large subunit methyltransferase N</fullName>
    </alternativeName>
    <alternativeName>
        <fullName evidence="1">tRNA (adenine(37)-C(2))-methyltransferase</fullName>
    </alternativeName>
    <alternativeName>
        <fullName evidence="1">tRNA m2A37 methyltransferase</fullName>
    </alternativeName>
</protein>
<accession>B0C9F4</accession>